<proteinExistence type="evidence at protein level"/>
<reference key="1">
    <citation type="journal article" date="2004" name="Nat. Genet.">
        <title>Complete sequencing and characterization of 21,243 full-length human cDNAs.</title>
        <authorList>
            <person name="Ota T."/>
            <person name="Suzuki Y."/>
            <person name="Nishikawa T."/>
            <person name="Otsuki T."/>
            <person name="Sugiyama T."/>
            <person name="Irie R."/>
            <person name="Wakamatsu A."/>
            <person name="Hayashi K."/>
            <person name="Sato H."/>
            <person name="Nagai K."/>
            <person name="Kimura K."/>
            <person name="Makita H."/>
            <person name="Sekine M."/>
            <person name="Obayashi M."/>
            <person name="Nishi T."/>
            <person name="Shibahara T."/>
            <person name="Tanaka T."/>
            <person name="Ishii S."/>
            <person name="Yamamoto J."/>
            <person name="Saito K."/>
            <person name="Kawai Y."/>
            <person name="Isono Y."/>
            <person name="Nakamura Y."/>
            <person name="Nagahari K."/>
            <person name="Murakami K."/>
            <person name="Yasuda T."/>
            <person name="Iwayanagi T."/>
            <person name="Wagatsuma M."/>
            <person name="Shiratori A."/>
            <person name="Sudo H."/>
            <person name="Hosoiri T."/>
            <person name="Kaku Y."/>
            <person name="Kodaira H."/>
            <person name="Kondo H."/>
            <person name="Sugawara M."/>
            <person name="Takahashi M."/>
            <person name="Kanda K."/>
            <person name="Yokoi T."/>
            <person name="Furuya T."/>
            <person name="Kikkawa E."/>
            <person name="Omura Y."/>
            <person name="Abe K."/>
            <person name="Kamihara K."/>
            <person name="Katsuta N."/>
            <person name="Sato K."/>
            <person name="Tanikawa M."/>
            <person name="Yamazaki M."/>
            <person name="Ninomiya K."/>
            <person name="Ishibashi T."/>
            <person name="Yamashita H."/>
            <person name="Murakawa K."/>
            <person name="Fujimori K."/>
            <person name="Tanai H."/>
            <person name="Kimata M."/>
            <person name="Watanabe M."/>
            <person name="Hiraoka S."/>
            <person name="Chiba Y."/>
            <person name="Ishida S."/>
            <person name="Ono Y."/>
            <person name="Takiguchi S."/>
            <person name="Watanabe S."/>
            <person name="Yosida M."/>
            <person name="Hotuta T."/>
            <person name="Kusano J."/>
            <person name="Kanehori K."/>
            <person name="Takahashi-Fujii A."/>
            <person name="Hara H."/>
            <person name="Tanase T.-O."/>
            <person name="Nomura Y."/>
            <person name="Togiya S."/>
            <person name="Komai F."/>
            <person name="Hara R."/>
            <person name="Takeuchi K."/>
            <person name="Arita M."/>
            <person name="Imose N."/>
            <person name="Musashino K."/>
            <person name="Yuuki H."/>
            <person name="Oshima A."/>
            <person name="Sasaki N."/>
            <person name="Aotsuka S."/>
            <person name="Yoshikawa Y."/>
            <person name="Matsunawa H."/>
            <person name="Ichihara T."/>
            <person name="Shiohata N."/>
            <person name="Sano S."/>
            <person name="Moriya S."/>
            <person name="Momiyama H."/>
            <person name="Satoh N."/>
            <person name="Takami S."/>
            <person name="Terashima Y."/>
            <person name="Suzuki O."/>
            <person name="Nakagawa S."/>
            <person name="Senoh A."/>
            <person name="Mizoguchi H."/>
            <person name="Goto Y."/>
            <person name="Shimizu F."/>
            <person name="Wakebe H."/>
            <person name="Hishigaki H."/>
            <person name="Watanabe T."/>
            <person name="Sugiyama A."/>
            <person name="Takemoto M."/>
            <person name="Kawakami B."/>
            <person name="Yamazaki M."/>
            <person name="Watanabe K."/>
            <person name="Kumagai A."/>
            <person name="Itakura S."/>
            <person name="Fukuzumi Y."/>
            <person name="Fujimori Y."/>
            <person name="Komiyama M."/>
            <person name="Tashiro H."/>
            <person name="Tanigami A."/>
            <person name="Fujiwara T."/>
            <person name="Ono T."/>
            <person name="Yamada K."/>
            <person name="Fujii Y."/>
            <person name="Ozaki K."/>
            <person name="Hirao M."/>
            <person name="Ohmori Y."/>
            <person name="Kawabata A."/>
            <person name="Hikiji T."/>
            <person name="Kobatake N."/>
            <person name="Inagaki H."/>
            <person name="Ikema Y."/>
            <person name="Okamoto S."/>
            <person name="Okitani R."/>
            <person name="Kawakami T."/>
            <person name="Noguchi S."/>
            <person name="Itoh T."/>
            <person name="Shigeta K."/>
            <person name="Senba T."/>
            <person name="Matsumura K."/>
            <person name="Nakajima Y."/>
            <person name="Mizuno T."/>
            <person name="Morinaga M."/>
            <person name="Sasaki M."/>
            <person name="Togashi T."/>
            <person name="Oyama M."/>
            <person name="Hata H."/>
            <person name="Watanabe M."/>
            <person name="Komatsu T."/>
            <person name="Mizushima-Sugano J."/>
            <person name="Satoh T."/>
            <person name="Shirai Y."/>
            <person name="Takahashi Y."/>
            <person name="Nakagawa K."/>
            <person name="Okumura K."/>
            <person name="Nagase T."/>
            <person name="Nomura N."/>
            <person name="Kikuchi H."/>
            <person name="Masuho Y."/>
            <person name="Yamashita R."/>
            <person name="Nakai K."/>
            <person name="Yada T."/>
            <person name="Nakamura Y."/>
            <person name="Ohara O."/>
            <person name="Isogai T."/>
            <person name="Sugano S."/>
        </authorList>
    </citation>
    <scope>NUCLEOTIDE SEQUENCE [LARGE SCALE MRNA] (ISOFORM 2)</scope>
    <source>
        <tissue>Amygdala</tissue>
    </source>
</reference>
<reference key="2">
    <citation type="journal article" date="2007" name="BMC Genomics">
        <title>The full-ORF clone resource of the German cDNA consortium.</title>
        <authorList>
            <person name="Bechtel S."/>
            <person name="Rosenfelder H."/>
            <person name="Duda A."/>
            <person name="Schmidt C.P."/>
            <person name="Ernst U."/>
            <person name="Wellenreuther R."/>
            <person name="Mehrle A."/>
            <person name="Schuster C."/>
            <person name="Bahr A."/>
            <person name="Bloecker H."/>
            <person name="Heubner D."/>
            <person name="Hoerlein A."/>
            <person name="Michel G."/>
            <person name="Wedler H."/>
            <person name="Koehrer K."/>
            <person name="Ottenwaelder B."/>
            <person name="Poustka A."/>
            <person name="Wiemann S."/>
            <person name="Schupp I."/>
        </authorList>
    </citation>
    <scope>NUCLEOTIDE SEQUENCE [LARGE SCALE MRNA] (ISOFORM 2)</scope>
    <source>
        <tissue>Uterus</tissue>
    </source>
</reference>
<reference key="3">
    <citation type="journal article" date="2006" name="Nature">
        <title>The DNA sequence and biological annotation of human chromosome 1.</title>
        <authorList>
            <person name="Gregory S.G."/>
            <person name="Barlow K.F."/>
            <person name="McLay K.E."/>
            <person name="Kaul R."/>
            <person name="Swarbreck D."/>
            <person name="Dunham A."/>
            <person name="Scott C.E."/>
            <person name="Howe K.L."/>
            <person name="Woodfine K."/>
            <person name="Spencer C.C.A."/>
            <person name="Jones M.C."/>
            <person name="Gillson C."/>
            <person name="Searle S."/>
            <person name="Zhou Y."/>
            <person name="Kokocinski F."/>
            <person name="McDonald L."/>
            <person name="Evans R."/>
            <person name="Phillips K."/>
            <person name="Atkinson A."/>
            <person name="Cooper R."/>
            <person name="Jones C."/>
            <person name="Hall R.E."/>
            <person name="Andrews T.D."/>
            <person name="Lloyd C."/>
            <person name="Ainscough R."/>
            <person name="Almeida J.P."/>
            <person name="Ambrose K.D."/>
            <person name="Anderson F."/>
            <person name="Andrew R.W."/>
            <person name="Ashwell R.I.S."/>
            <person name="Aubin K."/>
            <person name="Babbage A.K."/>
            <person name="Bagguley C.L."/>
            <person name="Bailey J."/>
            <person name="Beasley H."/>
            <person name="Bethel G."/>
            <person name="Bird C.P."/>
            <person name="Bray-Allen S."/>
            <person name="Brown J.Y."/>
            <person name="Brown A.J."/>
            <person name="Buckley D."/>
            <person name="Burton J."/>
            <person name="Bye J."/>
            <person name="Carder C."/>
            <person name="Chapman J.C."/>
            <person name="Clark S.Y."/>
            <person name="Clarke G."/>
            <person name="Clee C."/>
            <person name="Cobley V."/>
            <person name="Collier R.E."/>
            <person name="Corby N."/>
            <person name="Coville G.J."/>
            <person name="Davies J."/>
            <person name="Deadman R."/>
            <person name="Dunn M."/>
            <person name="Earthrowl M."/>
            <person name="Ellington A.G."/>
            <person name="Errington H."/>
            <person name="Frankish A."/>
            <person name="Frankland J."/>
            <person name="French L."/>
            <person name="Garner P."/>
            <person name="Garnett J."/>
            <person name="Gay L."/>
            <person name="Ghori M.R.J."/>
            <person name="Gibson R."/>
            <person name="Gilby L.M."/>
            <person name="Gillett W."/>
            <person name="Glithero R.J."/>
            <person name="Grafham D.V."/>
            <person name="Griffiths C."/>
            <person name="Griffiths-Jones S."/>
            <person name="Grocock R."/>
            <person name="Hammond S."/>
            <person name="Harrison E.S.I."/>
            <person name="Hart E."/>
            <person name="Haugen E."/>
            <person name="Heath P.D."/>
            <person name="Holmes S."/>
            <person name="Holt K."/>
            <person name="Howden P.J."/>
            <person name="Hunt A.R."/>
            <person name="Hunt S.E."/>
            <person name="Hunter G."/>
            <person name="Isherwood J."/>
            <person name="James R."/>
            <person name="Johnson C."/>
            <person name="Johnson D."/>
            <person name="Joy A."/>
            <person name="Kay M."/>
            <person name="Kershaw J.K."/>
            <person name="Kibukawa M."/>
            <person name="Kimberley A.M."/>
            <person name="King A."/>
            <person name="Knights A.J."/>
            <person name="Lad H."/>
            <person name="Laird G."/>
            <person name="Lawlor S."/>
            <person name="Leongamornlert D.A."/>
            <person name="Lloyd D.M."/>
            <person name="Loveland J."/>
            <person name="Lovell J."/>
            <person name="Lush M.J."/>
            <person name="Lyne R."/>
            <person name="Martin S."/>
            <person name="Mashreghi-Mohammadi M."/>
            <person name="Matthews L."/>
            <person name="Matthews N.S.W."/>
            <person name="McLaren S."/>
            <person name="Milne S."/>
            <person name="Mistry S."/>
            <person name="Moore M.J.F."/>
            <person name="Nickerson T."/>
            <person name="O'Dell C.N."/>
            <person name="Oliver K."/>
            <person name="Palmeiri A."/>
            <person name="Palmer S.A."/>
            <person name="Parker A."/>
            <person name="Patel D."/>
            <person name="Pearce A.V."/>
            <person name="Peck A.I."/>
            <person name="Pelan S."/>
            <person name="Phelps K."/>
            <person name="Phillimore B.J."/>
            <person name="Plumb R."/>
            <person name="Rajan J."/>
            <person name="Raymond C."/>
            <person name="Rouse G."/>
            <person name="Saenphimmachak C."/>
            <person name="Sehra H.K."/>
            <person name="Sheridan E."/>
            <person name="Shownkeen R."/>
            <person name="Sims S."/>
            <person name="Skuce C.D."/>
            <person name="Smith M."/>
            <person name="Steward C."/>
            <person name="Subramanian S."/>
            <person name="Sycamore N."/>
            <person name="Tracey A."/>
            <person name="Tromans A."/>
            <person name="Van Helmond Z."/>
            <person name="Wall M."/>
            <person name="Wallis J.M."/>
            <person name="White S."/>
            <person name="Whitehead S.L."/>
            <person name="Wilkinson J.E."/>
            <person name="Willey D.L."/>
            <person name="Williams H."/>
            <person name="Wilming L."/>
            <person name="Wray P.W."/>
            <person name="Wu Z."/>
            <person name="Coulson A."/>
            <person name="Vaudin M."/>
            <person name="Sulston J.E."/>
            <person name="Durbin R.M."/>
            <person name="Hubbard T."/>
            <person name="Wooster R."/>
            <person name="Dunham I."/>
            <person name="Carter N.P."/>
            <person name="McVean G."/>
            <person name="Ross M.T."/>
            <person name="Harrow J."/>
            <person name="Olson M.V."/>
            <person name="Beck S."/>
            <person name="Rogers J."/>
            <person name="Bentley D.R."/>
        </authorList>
    </citation>
    <scope>NUCLEOTIDE SEQUENCE [LARGE SCALE GENOMIC DNA]</scope>
</reference>
<reference key="4">
    <citation type="submission" date="2005-07" db="EMBL/GenBank/DDBJ databases">
        <authorList>
            <person name="Mural R.J."/>
            <person name="Istrail S."/>
            <person name="Sutton G.G."/>
            <person name="Florea L."/>
            <person name="Halpern A.L."/>
            <person name="Mobarry C.M."/>
            <person name="Lippert R."/>
            <person name="Walenz B."/>
            <person name="Shatkay H."/>
            <person name="Dew I."/>
            <person name="Miller J.R."/>
            <person name="Flanigan M.J."/>
            <person name="Edwards N.J."/>
            <person name="Bolanos R."/>
            <person name="Fasulo D."/>
            <person name="Halldorsson B.V."/>
            <person name="Hannenhalli S."/>
            <person name="Turner R."/>
            <person name="Yooseph S."/>
            <person name="Lu F."/>
            <person name="Nusskern D.R."/>
            <person name="Shue B.C."/>
            <person name="Zheng X.H."/>
            <person name="Zhong F."/>
            <person name="Delcher A.L."/>
            <person name="Huson D.H."/>
            <person name="Kravitz S.A."/>
            <person name="Mouchard L."/>
            <person name="Reinert K."/>
            <person name="Remington K.A."/>
            <person name="Clark A.G."/>
            <person name="Waterman M.S."/>
            <person name="Eichler E.E."/>
            <person name="Adams M.D."/>
            <person name="Hunkapiller M.W."/>
            <person name="Myers E.W."/>
            <person name="Venter J.C."/>
        </authorList>
    </citation>
    <scope>NUCLEOTIDE SEQUENCE [LARGE SCALE GENOMIC DNA]</scope>
</reference>
<reference key="5">
    <citation type="journal article" date="2004" name="Genome Res.">
        <title>The status, quality, and expansion of the NIH full-length cDNA project: the Mammalian Gene Collection (MGC).</title>
        <authorList>
            <consortium name="The MGC Project Team"/>
        </authorList>
    </citation>
    <scope>NUCLEOTIDE SEQUENCE [LARGE SCALE MRNA] (ISOFORM 1)</scope>
    <source>
        <tissue>Uterus</tissue>
    </source>
</reference>
<comment type="alternative products">
    <event type="alternative splicing"/>
    <isoform>
        <id>Q6P3X8-1</id>
        <name>1</name>
        <sequence type="displayed"/>
    </isoform>
    <isoform>
        <id>Q6P3X8-2</id>
        <name>2</name>
        <sequence type="described" ref="VSP_025631"/>
    </isoform>
</comment>
<dbReference type="EMBL" id="AK123219">
    <property type="protein sequence ID" value="BAG53880.1"/>
    <property type="molecule type" value="mRNA"/>
</dbReference>
<dbReference type="EMBL" id="BX647065">
    <property type="protein sequence ID" value="CAE46192.1"/>
    <property type="molecule type" value="mRNA"/>
</dbReference>
<dbReference type="EMBL" id="AL672183">
    <property type="status" value="NOT_ANNOTATED_CDS"/>
    <property type="molecule type" value="Genomic_DNA"/>
</dbReference>
<dbReference type="EMBL" id="CH471257">
    <property type="protein sequence ID" value="EAW57544.1"/>
    <property type="molecule type" value="Genomic_DNA"/>
</dbReference>
<dbReference type="EMBL" id="BC063785">
    <property type="protein sequence ID" value="AAH63785.1"/>
    <property type="molecule type" value="mRNA"/>
</dbReference>
<dbReference type="CCDS" id="CCDS31128.1">
    <molecule id="Q6P3X8-1"/>
</dbReference>
<dbReference type="CCDS" id="CCDS31129.1">
    <molecule id="Q6P3X8-2"/>
</dbReference>
<dbReference type="RefSeq" id="NP_001017434.1">
    <molecule id="Q6P3X8-2"/>
    <property type="nucleotide sequence ID" value="NM_001017434.2"/>
</dbReference>
<dbReference type="RefSeq" id="NP_733843.1">
    <molecule id="Q6P3X8-1"/>
    <property type="nucleotide sequence ID" value="NM_170725.3"/>
</dbReference>
<dbReference type="RefSeq" id="XP_011542461.1">
    <molecule id="Q6P3X8-1"/>
    <property type="nucleotide sequence ID" value="XM_011544159.3"/>
</dbReference>
<dbReference type="RefSeq" id="XP_011542463.1">
    <molecule id="Q6P3X8-1"/>
    <property type="nucleotide sequence ID" value="XM_011544161.4"/>
</dbReference>
<dbReference type="RefSeq" id="XP_047273800.1">
    <molecule id="Q6P3X8-2"/>
    <property type="nucleotide sequence ID" value="XM_047417844.1"/>
</dbReference>
<dbReference type="RefSeq" id="XP_054191947.1">
    <molecule id="Q6P3X8-1"/>
    <property type="nucleotide sequence ID" value="XM_054335972.1"/>
</dbReference>
<dbReference type="RefSeq" id="XP_054191948.1">
    <molecule id="Q6P3X8-1"/>
    <property type="nucleotide sequence ID" value="XM_054335973.1"/>
</dbReference>
<dbReference type="SMR" id="Q6P3X8"/>
<dbReference type="BioGRID" id="129355">
    <property type="interactions" value="4"/>
</dbReference>
<dbReference type="FunCoup" id="Q6P3X8">
    <property type="interactions" value="207"/>
</dbReference>
<dbReference type="IntAct" id="Q6P3X8">
    <property type="interactions" value="3"/>
</dbReference>
<dbReference type="STRING" id="9606.ENSP00000331643"/>
<dbReference type="iPTMnet" id="Q6P3X8"/>
<dbReference type="PhosphoSitePlus" id="Q6P3X8"/>
<dbReference type="BioMuta" id="PGBD2"/>
<dbReference type="DMDM" id="74749095"/>
<dbReference type="jPOST" id="Q6P3X8"/>
<dbReference type="MassIVE" id="Q6P3X8"/>
<dbReference type="PaxDb" id="9606-ENSP00000331643"/>
<dbReference type="PeptideAtlas" id="Q6P3X8"/>
<dbReference type="ProteomicsDB" id="66939">
    <molecule id="Q6P3X8-1"/>
</dbReference>
<dbReference type="ProteomicsDB" id="66940">
    <molecule id="Q6P3X8-2"/>
</dbReference>
<dbReference type="Antibodypedia" id="34770">
    <property type="antibodies" value="96 antibodies from 21 providers"/>
</dbReference>
<dbReference type="DNASU" id="267002"/>
<dbReference type="Ensembl" id="ENST00000329291.6">
    <molecule id="Q6P3X8-1"/>
    <property type="protein sequence ID" value="ENSP00000331643.5"/>
    <property type="gene ID" value="ENSG00000185220.12"/>
</dbReference>
<dbReference type="Ensembl" id="ENST00000355360.8">
    <molecule id="Q6P3X8-2"/>
    <property type="protein sequence ID" value="ENSP00000355424.3"/>
    <property type="gene ID" value="ENSG00000185220.12"/>
</dbReference>
<dbReference type="GeneID" id="267002"/>
<dbReference type="KEGG" id="hsa:267002"/>
<dbReference type="MANE-Select" id="ENST00000329291.6">
    <property type="protein sequence ID" value="ENSP00000331643.5"/>
    <property type="RefSeq nucleotide sequence ID" value="NM_170725.3"/>
    <property type="RefSeq protein sequence ID" value="NP_733843.1"/>
</dbReference>
<dbReference type="UCSC" id="uc001ifg.4">
    <molecule id="Q6P3X8-1"/>
    <property type="organism name" value="human"/>
</dbReference>
<dbReference type="AGR" id="HGNC:19399"/>
<dbReference type="CTD" id="267002"/>
<dbReference type="GeneCards" id="PGBD2"/>
<dbReference type="HGNC" id="HGNC:19399">
    <property type="gene designation" value="PGBD2"/>
</dbReference>
<dbReference type="HPA" id="ENSG00000185220">
    <property type="expression patterns" value="Low tissue specificity"/>
</dbReference>
<dbReference type="neXtProt" id="NX_Q6P3X8"/>
<dbReference type="OpenTargets" id="ENSG00000185220"/>
<dbReference type="PharmGKB" id="PA134877743"/>
<dbReference type="VEuPathDB" id="HostDB:ENSG00000185220"/>
<dbReference type="eggNOG" id="KOG1721">
    <property type="taxonomic scope" value="Eukaryota"/>
</dbReference>
<dbReference type="GeneTree" id="ENSGT00940000162327"/>
<dbReference type="HOGENOM" id="CLU_013052_2_0_1"/>
<dbReference type="InParanoid" id="Q6P3X8"/>
<dbReference type="OMA" id="CCHDAQV"/>
<dbReference type="OrthoDB" id="123207at2759"/>
<dbReference type="PAN-GO" id="Q6P3X8">
    <property type="GO annotations" value="1 GO annotation based on evolutionary models"/>
</dbReference>
<dbReference type="PhylomeDB" id="Q6P3X8"/>
<dbReference type="TreeFam" id="TF328011"/>
<dbReference type="PathwayCommons" id="Q6P3X8"/>
<dbReference type="SignaLink" id="Q6P3X8"/>
<dbReference type="BioGRID-ORCS" id="267002">
    <property type="hits" value="30 hits in 1155 CRISPR screens"/>
</dbReference>
<dbReference type="ChiTaRS" id="PGBD2">
    <property type="organism name" value="human"/>
</dbReference>
<dbReference type="GenomeRNAi" id="267002"/>
<dbReference type="Pharos" id="Q6P3X8">
    <property type="development level" value="Tdark"/>
</dbReference>
<dbReference type="PRO" id="PR:Q6P3X8"/>
<dbReference type="Proteomes" id="UP000005640">
    <property type="component" value="Chromosome 1"/>
</dbReference>
<dbReference type="RNAct" id="Q6P3X8">
    <property type="molecule type" value="protein"/>
</dbReference>
<dbReference type="Bgee" id="ENSG00000185220">
    <property type="expression patterns" value="Expressed in granulocyte and 163 other cell types or tissues"/>
</dbReference>
<dbReference type="ExpressionAtlas" id="Q6P3X8">
    <property type="expression patterns" value="baseline and differential"/>
</dbReference>
<dbReference type="GO" id="GO:0043565">
    <property type="term" value="F:sequence-specific DNA binding"/>
    <property type="evidence" value="ECO:0000318"/>
    <property type="project" value="GO_Central"/>
</dbReference>
<dbReference type="InterPro" id="IPR029526">
    <property type="entry name" value="PGBD"/>
</dbReference>
<dbReference type="InterPro" id="IPR052638">
    <property type="entry name" value="PiggyBac_TE-derived"/>
</dbReference>
<dbReference type="PANTHER" id="PTHR47055">
    <property type="entry name" value="DDE_TNP_1_7 DOMAIN-CONTAINING PROTEIN"/>
    <property type="match status" value="1"/>
</dbReference>
<dbReference type="PANTHER" id="PTHR47055:SF2">
    <property type="entry name" value="PIGGYBAC TRANSPOSABLE ELEMENT-DERIVED PROTEIN 2-RELATED"/>
    <property type="match status" value="1"/>
</dbReference>
<dbReference type="Pfam" id="PF13843">
    <property type="entry name" value="DDE_Tnp_1_7"/>
    <property type="match status" value="1"/>
</dbReference>
<keyword id="KW-0025">Alternative splicing</keyword>
<keyword id="KW-1267">Proteomics identification</keyword>
<keyword id="KW-1185">Reference proteome</keyword>
<gene>
    <name type="primary">PGBD2</name>
</gene>
<organism>
    <name type="scientific">Homo sapiens</name>
    <name type="common">Human</name>
    <dbReference type="NCBI Taxonomy" id="9606"/>
    <lineage>
        <taxon>Eukaryota</taxon>
        <taxon>Metazoa</taxon>
        <taxon>Chordata</taxon>
        <taxon>Craniata</taxon>
        <taxon>Vertebrata</taxon>
        <taxon>Euteleostomi</taxon>
        <taxon>Mammalia</taxon>
        <taxon>Eutheria</taxon>
        <taxon>Euarchontoglires</taxon>
        <taxon>Primates</taxon>
        <taxon>Haplorrhini</taxon>
        <taxon>Catarrhini</taxon>
        <taxon>Hominidae</taxon>
        <taxon>Homo</taxon>
    </lineage>
</organism>
<evidence type="ECO:0000256" key="1">
    <source>
        <dbReference type="SAM" id="MobiDB-lite"/>
    </source>
</evidence>
<evidence type="ECO:0000303" key="2">
    <source>
    </source>
</evidence>
<evidence type="ECO:0000303" key="3">
    <source>
    </source>
</evidence>
<name>PGBD2_HUMAN</name>
<accession>Q6P3X8</accession>
<accession>B3KVR8</accession>
<accession>Q6MZF8</accession>
<feature type="chain" id="PRO_0000288053" description="PiggyBac transposable element-derived protein 2">
    <location>
        <begin position="1"/>
        <end position="592"/>
    </location>
</feature>
<feature type="region of interest" description="Disordered" evidence="1">
    <location>
        <begin position="31"/>
        <end position="69"/>
    </location>
</feature>
<feature type="splice variant" id="VSP_025631" description="In isoform 2." evidence="2 3">
    <location>
        <begin position="1"/>
        <end position="251"/>
    </location>
</feature>
<sequence>MASTSRDVIAGRGIHSKVKSAKLLEVLNAMEEEESNNNREEIFIAPPDNAAGEFTDEDSGDEDSQRGAHLPGSVLHASVLCEDSGTGEDNDDLELQPAKKRQKAVVKPQRIWTKRDIRPDFGSWTASDPHIEDLKSQELSPVGLFELFFDEGTINFIVNETNRYAWQKNVNLSLTAQELKCVLGILILSGYISYPRRRMFWETSPDSHHHLVADAIRRDRFELIFSYLHFADNNELDASDRFAKVRPLIIRMNCNFQKHAPLEEFYSFGESMCEYFGHRGSKQLHRGKPVRLGYKIWCGTTSRGYLVWFEPSQGTLFTKPDRSLDLGGSMVIKFVDALQERGFLPYHIFFDKVFTSVKLMSILRKKGVKATGTVREYRTERCPLKDPKELKKMKRGSFDYKVDESEEIIVCRWHDSSVVNICSNAVGIEPVRLTSRHSGAAKTRTQVHQPSLVKLYQEKVGGVGRMDQNIAKYKVKIRGMKWYSSFIGYVIDAALNNAWQLHRICCQDAQVDLLAFRRYIACVYLESNADTTSQGRRSRRLETESRFDMIGHWIIHQDKRTRCALCHSQTNTRCEKCQKGVHAKCFREYHIR</sequence>
<protein>
    <recommendedName>
        <fullName>PiggyBac transposable element-derived protein 2</fullName>
    </recommendedName>
</protein>